<evidence type="ECO:0000256" key="1">
    <source>
        <dbReference type="SAM" id="MobiDB-lite"/>
    </source>
</evidence>
<gene>
    <name type="ordered locus">TP_1029</name>
</gene>
<feature type="chain" id="PRO_0000202374" description="Uncharacterized protein TP_1029">
    <location>
        <begin position="1"/>
        <end position="228"/>
    </location>
</feature>
<feature type="region of interest" description="Disordered" evidence="1">
    <location>
        <begin position="194"/>
        <end position="228"/>
    </location>
</feature>
<accession>O83992</accession>
<reference key="1">
    <citation type="journal article" date="1998" name="Science">
        <title>Complete genome sequence of Treponema pallidum, the syphilis spirochete.</title>
        <authorList>
            <person name="Fraser C.M."/>
            <person name="Norris S.J."/>
            <person name="Weinstock G.M."/>
            <person name="White O."/>
            <person name="Sutton G.G."/>
            <person name="Dodson R.J."/>
            <person name="Gwinn M.L."/>
            <person name="Hickey E.K."/>
            <person name="Clayton R.A."/>
            <person name="Ketchum K.A."/>
            <person name="Sodergren E."/>
            <person name="Hardham J.M."/>
            <person name="McLeod M.P."/>
            <person name="Salzberg S.L."/>
            <person name="Peterson J.D."/>
            <person name="Khalak H.G."/>
            <person name="Richardson D.L."/>
            <person name="Howell J.K."/>
            <person name="Chidambaram M."/>
            <person name="Utterback T.R."/>
            <person name="McDonald L.A."/>
            <person name="Artiach P."/>
            <person name="Bowman C."/>
            <person name="Cotton M.D."/>
            <person name="Fujii C."/>
            <person name="Garland S.A."/>
            <person name="Hatch B."/>
            <person name="Horst K."/>
            <person name="Roberts K.M."/>
            <person name="Sandusky M."/>
            <person name="Weidman J.F."/>
            <person name="Smith H.O."/>
            <person name="Venter J.C."/>
        </authorList>
    </citation>
    <scope>NUCLEOTIDE SEQUENCE [LARGE SCALE GENOMIC DNA]</scope>
    <source>
        <strain>Nichols</strain>
    </source>
</reference>
<keyword id="KW-1185">Reference proteome</keyword>
<organism>
    <name type="scientific">Treponema pallidum (strain Nichols)</name>
    <dbReference type="NCBI Taxonomy" id="243276"/>
    <lineage>
        <taxon>Bacteria</taxon>
        <taxon>Pseudomonadati</taxon>
        <taxon>Spirochaetota</taxon>
        <taxon>Spirochaetia</taxon>
        <taxon>Spirochaetales</taxon>
        <taxon>Treponemataceae</taxon>
        <taxon>Treponema</taxon>
    </lineage>
</organism>
<protein>
    <recommendedName>
        <fullName>Uncharacterized protein TP_1029</fullName>
    </recommendedName>
</protein>
<proteinExistence type="predicted"/>
<sequence length="228" mass="25187">MSKISSKISSVDQEKFQAFLQQILRNVKTQEDPRVLDAYRRLFRKSVPFSMRSYVAAHLAHTHCRAGATAGSTRRTGAREGIRTGSAHAPSCASAPASAARARDFERKARDYPALCPGDTTSIFISIGKNRHIYPRDIIALLMQRADVAREHIGTIRILDHYSFIQVLSGEAEAVIARLNGLFYRGRTLTVSHSRRADEHPAPSTEPHAAAVAPEPDFMAEPIPALEE</sequence>
<name>Y1029_TREPA</name>
<dbReference type="EMBL" id="AE000520">
    <property type="protein sequence ID" value="AAC65982.1"/>
    <property type="molecule type" value="Genomic_DNA"/>
</dbReference>
<dbReference type="PIR" id="H71251">
    <property type="entry name" value="H71251"/>
</dbReference>
<dbReference type="RefSeq" id="WP_010882473.1">
    <property type="nucleotide sequence ID" value="NC_021490.2"/>
</dbReference>
<dbReference type="SMR" id="O83992"/>
<dbReference type="STRING" id="243276.TP_1029"/>
<dbReference type="EnsemblBacteria" id="AAC65982">
    <property type="protein sequence ID" value="AAC65982"/>
    <property type="gene ID" value="TP_1029"/>
</dbReference>
<dbReference type="KEGG" id="tpa:TP_1029"/>
<dbReference type="KEGG" id="tpw:TPANIC_1029"/>
<dbReference type="eggNOG" id="COG0724">
    <property type="taxonomic scope" value="Bacteria"/>
</dbReference>
<dbReference type="HOGENOM" id="CLU_090659_0_0_12"/>
<dbReference type="OrthoDB" id="366519at2"/>
<dbReference type="Proteomes" id="UP000000811">
    <property type="component" value="Chromosome"/>
</dbReference>
<dbReference type="CDD" id="cd12252">
    <property type="entry name" value="RRM_DbpA"/>
    <property type="match status" value="1"/>
</dbReference>
<dbReference type="Gene3D" id="3.30.70.330">
    <property type="match status" value="1"/>
</dbReference>
<dbReference type="InterPro" id="IPR005580">
    <property type="entry name" value="DbpA/CsdA_RNA-bd_dom"/>
</dbReference>
<dbReference type="InterPro" id="IPR012677">
    <property type="entry name" value="Nucleotide-bd_a/b_plait_sf"/>
</dbReference>
<dbReference type="Pfam" id="PF03880">
    <property type="entry name" value="DbpA"/>
    <property type="match status" value="1"/>
</dbReference>